<name>EPD1_GIBZE</name>
<sequence>MESSSTPLAEYFWIAGVESVSYQDPNSQPAPAVPVESTIIEDGEPEDEWTNGGQPKTNARHSRQNSASRLSKMSLTERFSIQTLDDTDGNTKSNRSSATIRAVNPPDFSNGNDDSNGNSQNPAPSGTLGEGSMFMGDFDFDKALVKFAAEREVFLEDLTFSAGAKVQARAPMVNPRMERIRAEESDSGRLSPLRSIKGSIRRKMSFRDMNSVRKQPSNRISTSRAASIRTTRRLSNYNSVIPPPEPLNTDPDMHPLKRRFEPVLLDRYPPQEAGDEISRRGRFPDYVPMFAFPNDIQIVSSDDRPRSTWHGFTMTSDDNSKLYGITIIIWIALNADVAEDVEKKCEEWRQSHMSEEERELAASLGVRLAGERTHLSQLLAKLPTIPSGSPARERLEDEISTVEEKITLMTDMLRPLRHGAASKIEGLTAGESGLWAPRAYGILGRDAGNMSFWKEWLKAIVTPMTDGSVLRIPPSSPRVGRWQPLERYVVNLCTEAFNPLGSKTQVELGVRELRLYARKEADNEIPGSRTIDIYALFRCLSLENIVALFEYAMAESRIIFLSSHASMLHLACHALANLLYPLKWASIFIPILPARLLSALEAPCPYIVGIERRYDNIELPEDDYVLVDLDKDTIDATSQPVRLPRQARRKLMSLLQVAAPHKLRYGVATGPPPYAMESFPYDAFSTENGSLFRTSTPKSTLGKWVSQSSSGFGEADPPNEIQPPIFNAFASAHVENGKSDRPSTSKSGKTSPQSSVSPVSINFPPMPSTPVSRSDSGFALASTLREKRSGHFGEEKMRRSSSFGVDKHPPFQKPGMPFLNGHQANLSISAISVESQNSVIGGANGGYGGGYAPSTYAQSTLAASTIMPSMQIQPVRNTETTVWVEGHCFNYMPKDNTSMCTICNDLAEGDGVYRCTGCKIVSHGRCLGYCSLICPEAFHADRVRAAFVRCLASLLYTYRKYLGRPSKQQKSNGQLYAFDMDGFIKSLPHDQHDYAAMMRETQCFNEFIHDREMQPANDASIRLFDEIIMAKKARGRSGLATGLSRLSTLRASHGASTYGGFGPARGGSNSKIPAFLGDISDHIWRTASVPLPKGNFPGEYKTIVTRTPARLDRSLMREPRSIQGMPRVEPRGTRGLIRKQVPNMFGTTPPT</sequence>
<organism>
    <name type="scientific">Gibberella zeae (strain ATCC MYA-4620 / CBS 123657 / FGSC 9075 / NRRL 31084 / PH-1)</name>
    <name type="common">Wheat head blight fungus</name>
    <name type="synonym">Fusarium graminearum</name>
    <dbReference type="NCBI Taxonomy" id="229533"/>
    <lineage>
        <taxon>Eukaryota</taxon>
        <taxon>Fungi</taxon>
        <taxon>Dikarya</taxon>
        <taxon>Ascomycota</taxon>
        <taxon>Pezizomycotina</taxon>
        <taxon>Sordariomycetes</taxon>
        <taxon>Hypocreomycetidae</taxon>
        <taxon>Hypocreales</taxon>
        <taxon>Nectriaceae</taxon>
        <taxon>Fusarium</taxon>
    </lineage>
</organism>
<comment type="function">
    <text evidence="4">Acts as an elicitor that triggers cell death and defense responses in the host plants.</text>
</comment>
<comment type="subcellular location">
    <subcellularLocation>
        <location evidence="7">Secreted</location>
    </subcellularLocation>
    <subcellularLocation>
        <location evidence="7">Host cell</location>
    </subcellularLocation>
</comment>
<comment type="disruption phenotype">
    <text evidence="4">Enhances virulence of the pathogen towards Nicotiana benthamiana.</text>
</comment>
<comment type="similarity">
    <text evidence="6">Belongs to the EPD1 elicitor family.</text>
</comment>
<protein>
    <recommendedName>
        <fullName evidence="5">Elicitor of plant defense protein 1</fullName>
    </recommendedName>
</protein>
<proteinExistence type="inferred from homology"/>
<accession>I1RQE2</accession>
<evidence type="ECO:0000255" key="1">
    <source>
        <dbReference type="PROSITE-ProRule" id="PRU00226"/>
    </source>
</evidence>
<evidence type="ECO:0000255" key="2">
    <source>
        <dbReference type="PROSITE-ProRule" id="PRU00304"/>
    </source>
</evidence>
<evidence type="ECO:0000256" key="3">
    <source>
        <dbReference type="SAM" id="MobiDB-lite"/>
    </source>
</evidence>
<evidence type="ECO:0000269" key="4">
    <source>
    </source>
</evidence>
<evidence type="ECO:0000303" key="5">
    <source>
    </source>
</evidence>
<evidence type="ECO:0000305" key="6"/>
<evidence type="ECO:0000305" key="7">
    <source>
    </source>
</evidence>
<gene>
    <name evidence="5" type="primary">EPD1</name>
    <name type="ORF">FG06284</name>
    <name type="ORF">FGRAMPH1_01T19943</name>
</gene>
<reference key="1">
    <citation type="journal article" date="2007" name="Science">
        <title>The Fusarium graminearum genome reveals a link between localized polymorphism and pathogen specialization.</title>
        <authorList>
            <person name="Cuomo C.A."/>
            <person name="Gueldener U."/>
            <person name="Xu J.-R."/>
            <person name="Trail F."/>
            <person name="Turgeon B.G."/>
            <person name="Di Pietro A."/>
            <person name="Walton J.D."/>
            <person name="Ma L.-J."/>
            <person name="Baker S.E."/>
            <person name="Rep M."/>
            <person name="Adam G."/>
            <person name="Antoniw J."/>
            <person name="Baldwin T."/>
            <person name="Calvo S.E."/>
            <person name="Chang Y.-L."/>
            <person name="DeCaprio D."/>
            <person name="Gale L.R."/>
            <person name="Gnerre S."/>
            <person name="Goswami R.S."/>
            <person name="Hammond-Kosack K."/>
            <person name="Harris L.J."/>
            <person name="Hilburn K."/>
            <person name="Kennell J.C."/>
            <person name="Kroken S."/>
            <person name="Magnuson J.K."/>
            <person name="Mannhaupt G."/>
            <person name="Mauceli E.W."/>
            <person name="Mewes H.-W."/>
            <person name="Mitterbauer R."/>
            <person name="Muehlbauer G."/>
            <person name="Muensterkoetter M."/>
            <person name="Nelson D."/>
            <person name="O'Donnell K."/>
            <person name="Ouellet T."/>
            <person name="Qi W."/>
            <person name="Quesneville H."/>
            <person name="Roncero M.I.G."/>
            <person name="Seong K.-Y."/>
            <person name="Tetko I.V."/>
            <person name="Urban M."/>
            <person name="Waalwijk C."/>
            <person name="Ward T.J."/>
            <person name="Yao J."/>
            <person name="Birren B.W."/>
            <person name="Kistler H.C."/>
        </authorList>
    </citation>
    <scope>NUCLEOTIDE SEQUENCE [LARGE SCALE GENOMIC DNA]</scope>
    <source>
        <strain>ATCC MYA-4620 / CBS 123657 / FGSC 9075 / NRRL 31084 / PH-1</strain>
    </source>
</reference>
<reference key="2">
    <citation type="journal article" date="2010" name="Nature">
        <title>Comparative genomics reveals mobile pathogenicity chromosomes in Fusarium.</title>
        <authorList>
            <person name="Ma L.-J."/>
            <person name="van der Does H.C."/>
            <person name="Borkovich K.A."/>
            <person name="Coleman J.J."/>
            <person name="Daboussi M.-J."/>
            <person name="Di Pietro A."/>
            <person name="Dufresne M."/>
            <person name="Freitag M."/>
            <person name="Grabherr M."/>
            <person name="Henrissat B."/>
            <person name="Houterman P.M."/>
            <person name="Kang S."/>
            <person name="Shim W.-B."/>
            <person name="Woloshuk C."/>
            <person name="Xie X."/>
            <person name="Xu J.-R."/>
            <person name="Antoniw J."/>
            <person name="Baker S.E."/>
            <person name="Bluhm B.H."/>
            <person name="Breakspear A."/>
            <person name="Brown D.W."/>
            <person name="Butchko R.A.E."/>
            <person name="Chapman S."/>
            <person name="Coulson R."/>
            <person name="Coutinho P.M."/>
            <person name="Danchin E.G.J."/>
            <person name="Diener A."/>
            <person name="Gale L.R."/>
            <person name="Gardiner D.M."/>
            <person name="Goff S."/>
            <person name="Hammond-Kosack K.E."/>
            <person name="Hilburn K."/>
            <person name="Hua-Van A."/>
            <person name="Jonkers W."/>
            <person name="Kazan K."/>
            <person name="Kodira C.D."/>
            <person name="Koehrsen M."/>
            <person name="Kumar L."/>
            <person name="Lee Y.-H."/>
            <person name="Li L."/>
            <person name="Manners J.M."/>
            <person name="Miranda-Saavedra D."/>
            <person name="Mukherjee M."/>
            <person name="Park G."/>
            <person name="Park J."/>
            <person name="Park S.-Y."/>
            <person name="Proctor R.H."/>
            <person name="Regev A."/>
            <person name="Ruiz-Roldan M.C."/>
            <person name="Sain D."/>
            <person name="Sakthikumar S."/>
            <person name="Sykes S."/>
            <person name="Schwartz D.C."/>
            <person name="Turgeon B.G."/>
            <person name="Wapinski I."/>
            <person name="Yoder O."/>
            <person name="Young S."/>
            <person name="Zeng Q."/>
            <person name="Zhou S."/>
            <person name="Galagan J."/>
            <person name="Cuomo C.A."/>
            <person name="Kistler H.C."/>
            <person name="Rep M."/>
        </authorList>
    </citation>
    <scope>GENOME REANNOTATION</scope>
    <source>
        <strain>ATCC MYA-4620 / CBS 123657 / FGSC 9075 / NRRL 31084 / PH-1</strain>
    </source>
</reference>
<reference key="3">
    <citation type="journal article" date="2015" name="BMC Genomics">
        <title>The completed genome sequence of the pathogenic ascomycete fungus Fusarium graminearum.</title>
        <authorList>
            <person name="King R."/>
            <person name="Urban M."/>
            <person name="Hammond-Kosack M.C.U."/>
            <person name="Hassani-Pak K."/>
            <person name="Hammond-Kosack K.E."/>
        </authorList>
    </citation>
    <scope>NUCLEOTIDE SEQUENCE [LARGE SCALE GENOMIC DNA]</scope>
    <source>
        <strain>ATCC MYA-4620 / CBS 123657 / FGSC 9075 / NRRL 31084 / PH-1</strain>
    </source>
</reference>
<reference key="4">
    <citation type="journal article" date="2025" name="Adv. Sci.">
        <title>Recognition of a fungal effector potentiates pathogen-associated molecular pattern-triggered immunity in cotton.</title>
        <authorList>
            <person name="Sun L."/>
            <person name="Li X."/>
            <person name="Zhong J."/>
            <person name="Wang Y."/>
            <person name="Li B."/>
            <person name="Ye Z."/>
            <person name="Zhang J."/>
        </authorList>
    </citation>
    <scope>FUNCTION</scope>
    <scope>DISRUPTION PHENOTYPE</scope>
</reference>
<dbReference type="EMBL" id="HG970334">
    <property type="protein sequence ID" value="CEF88314.1"/>
    <property type="molecule type" value="Genomic_DNA"/>
</dbReference>
<dbReference type="RefSeq" id="XP_011324935.1">
    <property type="nucleotide sequence ID" value="XM_011326633.1"/>
</dbReference>
<dbReference type="KEGG" id="fgr:FGSG_06284"/>
<dbReference type="VEuPathDB" id="FungiDB:FGRAMPH1_01G19943"/>
<dbReference type="eggNOG" id="ENOG502QQUM">
    <property type="taxonomic scope" value="Eukaryota"/>
</dbReference>
<dbReference type="HOGENOM" id="CLU_001932_0_0_1"/>
<dbReference type="InParanoid" id="I1RQE2"/>
<dbReference type="OrthoDB" id="1331806at2759"/>
<dbReference type="Proteomes" id="UP000070720">
    <property type="component" value="Chromosome 3"/>
</dbReference>
<dbReference type="GO" id="GO:0031410">
    <property type="term" value="C:cytoplasmic vesicle"/>
    <property type="evidence" value="ECO:0007669"/>
    <property type="project" value="TreeGrafter"/>
</dbReference>
<dbReference type="GO" id="GO:0005576">
    <property type="term" value="C:extracellular region"/>
    <property type="evidence" value="ECO:0007669"/>
    <property type="project" value="UniProtKB-SubCell"/>
</dbReference>
<dbReference type="GO" id="GO:0043657">
    <property type="term" value="C:host cell"/>
    <property type="evidence" value="ECO:0007669"/>
    <property type="project" value="UniProtKB-SubCell"/>
</dbReference>
<dbReference type="GO" id="GO:0046872">
    <property type="term" value="F:metal ion binding"/>
    <property type="evidence" value="ECO:0007669"/>
    <property type="project" value="UniProtKB-KW"/>
</dbReference>
<dbReference type="GO" id="GO:0032483">
    <property type="term" value="P:regulation of Rab protein signal transduction"/>
    <property type="evidence" value="ECO:0007669"/>
    <property type="project" value="TreeGrafter"/>
</dbReference>
<dbReference type="CDD" id="cd00029">
    <property type="entry name" value="C1"/>
    <property type="match status" value="1"/>
</dbReference>
<dbReference type="Gene3D" id="3.40.50.11500">
    <property type="match status" value="1"/>
</dbReference>
<dbReference type="InterPro" id="IPR046349">
    <property type="entry name" value="C1-like_sf"/>
</dbReference>
<dbReference type="InterPro" id="IPR001194">
    <property type="entry name" value="cDENN_dom"/>
</dbReference>
<dbReference type="InterPro" id="IPR005112">
    <property type="entry name" value="dDENN_dom"/>
</dbReference>
<dbReference type="InterPro" id="IPR043153">
    <property type="entry name" value="DENN_C"/>
</dbReference>
<dbReference type="InterPro" id="IPR051696">
    <property type="entry name" value="DENN_Domain_GEFs"/>
</dbReference>
<dbReference type="InterPro" id="IPR002219">
    <property type="entry name" value="PE/DAG-bd"/>
</dbReference>
<dbReference type="InterPro" id="IPR037516">
    <property type="entry name" value="Tripartite_DENN"/>
</dbReference>
<dbReference type="InterPro" id="IPR005113">
    <property type="entry name" value="uDENN_dom"/>
</dbReference>
<dbReference type="PANTHER" id="PTHR12296:SF21">
    <property type="entry name" value="DENN DOMAIN-CONTAINING PROTEIN 3"/>
    <property type="match status" value="1"/>
</dbReference>
<dbReference type="PANTHER" id="PTHR12296">
    <property type="entry name" value="DENN DOMAIN-CONTAINING PROTEIN 4"/>
    <property type="match status" value="1"/>
</dbReference>
<dbReference type="Pfam" id="PF03455">
    <property type="entry name" value="dDENN"/>
    <property type="match status" value="1"/>
</dbReference>
<dbReference type="Pfam" id="PF02141">
    <property type="entry name" value="DENN"/>
    <property type="match status" value="1"/>
</dbReference>
<dbReference type="Pfam" id="PF03456">
    <property type="entry name" value="uDENN"/>
    <property type="match status" value="1"/>
</dbReference>
<dbReference type="SMART" id="SM00801">
    <property type="entry name" value="dDENN"/>
    <property type="match status" value="1"/>
</dbReference>
<dbReference type="SMART" id="SM00799">
    <property type="entry name" value="DENN"/>
    <property type="match status" value="1"/>
</dbReference>
<dbReference type="SMART" id="SM00800">
    <property type="entry name" value="uDENN"/>
    <property type="match status" value="1"/>
</dbReference>
<dbReference type="SUPFAM" id="SSF57889">
    <property type="entry name" value="Cysteine-rich domain"/>
    <property type="match status" value="1"/>
</dbReference>
<dbReference type="PROSITE" id="PS50211">
    <property type="entry name" value="DENN"/>
    <property type="match status" value="1"/>
</dbReference>
<dbReference type="PROSITE" id="PS50081">
    <property type="entry name" value="ZF_DAG_PE_2"/>
    <property type="match status" value="1"/>
</dbReference>
<keyword id="KW-0479">Metal-binding</keyword>
<keyword id="KW-1185">Reference proteome</keyword>
<keyword id="KW-0964">Secreted</keyword>
<keyword id="KW-0843">Virulence</keyword>
<keyword id="KW-0862">Zinc</keyword>
<keyword id="KW-0863">Zinc-finger</keyword>
<feature type="chain" id="PRO_0000462186" description="Elicitor of plant defense protein 1">
    <location>
        <begin position="1"/>
        <end position="1151"/>
    </location>
</feature>
<feature type="domain" description="uDENN" evidence="2">
    <location>
        <begin position="242"/>
        <end position="500"/>
    </location>
</feature>
<feature type="domain" description="cDENN" evidence="2">
    <location>
        <begin position="524"/>
        <end position="656"/>
    </location>
</feature>
<feature type="domain" description="dDENN" evidence="2">
    <location>
        <begin position="658"/>
        <end position="1019"/>
    </location>
</feature>
<feature type="zinc finger region" description="Phorbol-ester/DAG-type" evidence="1">
    <location>
        <begin position="886"/>
        <end position="934"/>
    </location>
</feature>
<feature type="region of interest" description="Disordered" evidence="3">
    <location>
        <begin position="22"/>
        <end position="130"/>
    </location>
</feature>
<feature type="region of interest" description="Disordered" evidence="3">
    <location>
        <begin position="178"/>
        <end position="197"/>
    </location>
</feature>
<feature type="region of interest" description="Disordered" evidence="3">
    <location>
        <begin position="236"/>
        <end position="255"/>
    </location>
</feature>
<feature type="region of interest" description="Disordered" evidence="3">
    <location>
        <begin position="695"/>
        <end position="809"/>
    </location>
</feature>
<feature type="compositionally biased region" description="Acidic residues" evidence="3">
    <location>
        <begin position="39"/>
        <end position="49"/>
    </location>
</feature>
<feature type="compositionally biased region" description="Polar residues" evidence="3">
    <location>
        <begin position="64"/>
        <end position="99"/>
    </location>
</feature>
<feature type="compositionally biased region" description="Low complexity" evidence="3">
    <location>
        <begin position="104"/>
        <end position="122"/>
    </location>
</feature>
<feature type="compositionally biased region" description="Basic and acidic residues" evidence="3">
    <location>
        <begin position="178"/>
        <end position="187"/>
    </location>
</feature>
<feature type="compositionally biased region" description="Polar residues" evidence="3">
    <location>
        <begin position="695"/>
        <end position="711"/>
    </location>
</feature>
<feature type="compositionally biased region" description="Polar residues" evidence="3">
    <location>
        <begin position="744"/>
        <end position="760"/>
    </location>
</feature>
<feature type="compositionally biased region" description="Basic and acidic residues" evidence="3">
    <location>
        <begin position="784"/>
        <end position="798"/>
    </location>
</feature>